<keyword id="KW-0963">Cytoplasm</keyword>
<keyword id="KW-0225">Disease variant</keyword>
<keyword id="KW-0887">Epilepsy</keyword>
<keyword id="KW-0440">LIM domain</keyword>
<keyword id="KW-0449">Lipoprotein</keyword>
<keyword id="KW-0472">Membrane</keyword>
<keyword id="KW-0479">Metal-binding</keyword>
<keyword id="KW-0488">Methylation</keyword>
<keyword id="KW-0523">Neurodegeneration</keyword>
<keyword id="KW-0539">Nucleus</keyword>
<keyword id="KW-0597">Phosphoprotein</keyword>
<keyword id="KW-0636">Prenylation</keyword>
<keyword id="KW-1267">Proteomics identification</keyword>
<keyword id="KW-1185">Reference proteome</keyword>
<keyword id="KW-0677">Repeat</keyword>
<keyword id="KW-0862">Zinc</keyword>
<sequence>MPLEMEPKMSKLAFGCQRSSTSDDDSGCALEEYAWVPPGLRPEQIQLYFACLPEEKVPYVNSPGEKHRIKQLLYQLPPHDNEVRYCQSLSEEEKKELQVFSAQRKKEALGRGTIKLLSRAVMHAVCEQCGLKINGGEVAVFASRAGPGVCWHPSCFVCFTCNELLVDLIYFYQDGKIHCGRHHAELLKPRCSACDEIIFADECTEAEGRHWHMKHFCCLECETVLGGQRYIMKDGRPFCCGCFESLYAEYCETCGEHIGVDHAQMTYDGQHWHATEACFSCAQCKASLLGCPFLPKQGQIYCSKTCSLGEDVHASDSSDSAFQSARSRDSRRSVRMGKSSRSADQCRQSLLLSPALNYKFPGLSGNADDTLSRKLDDLSLSRQGTSFASEEFWKGRVEQETPEDPEEWADHEDYMTQLLLKFGDKSLFQPQPNEMDIRASEHWISDNMVKSKTELKQNNQSLASKKYQSDMYWAQSQDGLGDSAYGSHPGPASSRRLQELELDHGASGYNHDETQWYEDSLECLSDLKPEQSVRDSMDSLALSNITGASVDGENKPRPSLYSLQNFEEMETEDCEKMSNMGTLNSSMLHRSAESLKSLSSELCPEKILPEEKPVHLPVLRRSKSQSRPQQVKFSDDVIDNGNYDIEIRQPPMSERTRRRVYNFEERGSRSHHHRRRRSRKSRSDNALNLVTERKYSPKDRLRLYTPDNYEKFIQNKSAREIQAYIQNADLYGQYAHATSDYGLQNPGMNRFLGLYGEDDDSWCSSSSSSSDSEEEGYFLGQPIPQPRPQRFAYYTDDLSSPPSALPTPQFGQRTTKSKKKKGHKGKNCIIS</sequence>
<proteinExistence type="evidence at protein level"/>
<feature type="chain" id="PRO_0000075889" description="Prickle-like protein 1">
    <location>
        <begin position="1"/>
        <end position="828"/>
    </location>
</feature>
<feature type="propeptide" id="PRO_0000396712" description="Removed in mature form" evidence="12">
    <location>
        <begin position="829"/>
        <end position="831"/>
    </location>
</feature>
<feature type="domain" description="PET" evidence="3">
    <location>
        <begin position="14"/>
        <end position="122"/>
    </location>
</feature>
<feature type="domain" description="LIM zinc-binding 1" evidence="2">
    <location>
        <begin position="124"/>
        <end position="189"/>
    </location>
</feature>
<feature type="domain" description="LIM zinc-binding 2" evidence="2">
    <location>
        <begin position="189"/>
        <end position="249"/>
    </location>
</feature>
<feature type="domain" description="LIM zinc-binding 3" evidence="2">
    <location>
        <begin position="249"/>
        <end position="313"/>
    </location>
</feature>
<feature type="region of interest" description="Disordered" evidence="4">
    <location>
        <begin position="313"/>
        <end position="342"/>
    </location>
</feature>
<feature type="region of interest" description="Disordered" evidence="4">
    <location>
        <begin position="663"/>
        <end position="688"/>
    </location>
</feature>
<feature type="region of interest" description="Disordered" evidence="4">
    <location>
        <begin position="763"/>
        <end position="831"/>
    </location>
</feature>
<feature type="compositionally biased region" description="Basic residues" evidence="4">
    <location>
        <begin position="669"/>
        <end position="680"/>
    </location>
</feature>
<feature type="compositionally biased region" description="Basic residues" evidence="4">
    <location>
        <begin position="815"/>
        <end position="831"/>
    </location>
</feature>
<feature type="modified residue" description="Phosphoserine" evidence="1">
    <location>
        <position position="315"/>
    </location>
</feature>
<feature type="modified residue" description="Phosphoserine" evidence="1">
    <location>
        <position position="591"/>
    </location>
</feature>
<feature type="modified residue" description="Phosphoserine" evidence="1">
    <location>
        <position position="594"/>
    </location>
</feature>
<feature type="modified residue" description="Phosphoserine" evidence="1">
    <location>
        <position position="683"/>
    </location>
</feature>
<feature type="modified residue" description="Cysteine methyl ester" evidence="12">
    <location>
        <position position="828"/>
    </location>
</feature>
<feature type="lipid moiety-binding region" description="S-farnesyl cysteine" evidence="6 8">
    <location>
        <position position="828"/>
    </location>
</feature>
<feature type="sequence variant" id="VAR_066850" description="Probable risk factor for NTD; dbSNP:rs141795695." evidence="11">
    <original>I</original>
    <variation>T</variation>
    <location>
        <position position="69"/>
    </location>
</feature>
<feature type="sequence variant" id="VAR_066851" description="Probable risk factor for NTD; dbSNP:rs796052934." evidence="11">
    <original>N</original>
    <variation>H</variation>
    <location>
        <position position="81"/>
    </location>
</feature>
<feature type="sequence variant" id="VAR_054663" description="In EPM1B; affects interaction with REST; dbSNP:rs113994140." evidence="9 10">
    <original>R</original>
    <variation>Q</variation>
    <location>
        <position position="104"/>
    </location>
</feature>
<feature type="sequence variant" id="VAR_066852" description="Probable risk factor for NTD; dbSNP:rs371720624." evidence="11">
    <original>V</original>
    <variation>I</variation>
    <location>
        <position position="121"/>
    </location>
</feature>
<feature type="sequence variant" id="VAR_066853" description="In dbSNP:rs79087668." evidence="11">
    <original>A</original>
    <variation>T</variation>
    <location>
        <position position="124"/>
    </location>
</feature>
<feature type="sequence variant" id="VAR_065580" description="In EPM1B; dbSNP:rs281865563." evidence="10">
    <original>R</original>
    <variation>H</variation>
    <location>
        <position position="144"/>
    </location>
</feature>
<feature type="sequence variant" id="VAR_066854" description="Probable risk factor for NTD; dbSNP:rs559947948." evidence="11">
    <original>T</original>
    <variation>M</variation>
    <location>
        <position position="275"/>
    </location>
</feature>
<feature type="sequence variant" id="VAR_065581" description="In EPM1B; dbSNP:rs281865564." evidence="10">
    <original>Y</original>
    <variation>H</variation>
    <location>
        <position position="472"/>
    </location>
</feature>
<feature type="sequence variant" id="VAR_066855" description="Probable risk factor for NTD; dbSNP:rs768954477." evidence="11">
    <original>R</original>
    <variation>C</variation>
    <location>
        <position position="682"/>
    </location>
</feature>
<feature type="sequence variant" id="VAR_066856" description="Probable risk factor for NTD; dbSNP:rs138452760." evidence="11">
    <original>S</original>
    <variation>F</variation>
    <location>
        <position position="739"/>
    </location>
</feature>
<feature type="sequence variant" id="VAR_056164" description="In dbSNP:rs3827522.">
    <original>P</original>
    <variation>S</variation>
    <location>
        <position position="746"/>
    </location>
</feature>
<feature type="sequence variant" id="VAR_066857" description="Probable risk factor for NTD; dbSNP:rs146670726." evidence="11">
    <original>D</original>
    <variation>N</variation>
    <location>
        <position position="771"/>
    </location>
</feature>
<feature type="sequence variant" id="VAR_066858" description="Probable risk factor for NTD." evidence="11">
    <original>S</original>
    <variation>C</variation>
    <location>
        <position position="799"/>
    </location>
</feature>
<feature type="mutagenesis site" description="Abolishes localization to the nuclear membrane." evidence="6">
    <location>
        <begin position="828"/>
        <end position="831"/>
    </location>
</feature>
<feature type="sequence conflict" description="In Ref. 2; BAB71198." evidence="12" ref="2">
    <original>S</original>
    <variation>P</variation>
    <location>
        <position position="739"/>
    </location>
</feature>
<accession>Q96MT3</accession>
<accession>Q14C83</accession>
<accession>Q71QF8</accession>
<accession>Q96N00</accession>
<evidence type="ECO:0000250" key="1">
    <source>
        <dbReference type="UniProtKB" id="Q3U5C7"/>
    </source>
</evidence>
<evidence type="ECO:0000255" key="2">
    <source>
        <dbReference type="PROSITE-ProRule" id="PRU00125"/>
    </source>
</evidence>
<evidence type="ECO:0000255" key="3">
    <source>
        <dbReference type="PROSITE-ProRule" id="PRU00636"/>
    </source>
</evidence>
<evidence type="ECO:0000256" key="4">
    <source>
        <dbReference type="SAM" id="MobiDB-lite"/>
    </source>
</evidence>
<evidence type="ECO:0000269" key="5">
    <source>
    </source>
</evidence>
<evidence type="ECO:0000269" key="6">
    <source>
    </source>
</evidence>
<evidence type="ECO:0000269" key="7">
    <source>
    </source>
</evidence>
<evidence type="ECO:0000269" key="8">
    <source>
    </source>
</evidence>
<evidence type="ECO:0000269" key="9">
    <source>
    </source>
</evidence>
<evidence type="ECO:0000269" key="10">
    <source>
    </source>
</evidence>
<evidence type="ECO:0000269" key="11">
    <source>
    </source>
</evidence>
<evidence type="ECO:0000305" key="12"/>
<name>PRIC1_HUMAN</name>
<comment type="function">
    <text evidence="11">Involved in the planar cell polarity pathway that controls convergent extension during gastrulation and neural tube closure. Convergent extension is a complex morphogenetic process during which cells elongate, move mediolaterally, and intercalate between neighboring cells, leading to convergence toward the mediolateral axis and extension along the anteroposterior axis. Necessary for nuclear localization of REST. May serve as nuclear receptor.</text>
</comment>
<comment type="subunit">
    <text evidence="6 7">Interacts with REST.</text>
</comment>
<comment type="interaction">
    <interactant intactId="EBI-2348662">
        <id>Q96MT3</id>
    </interactant>
    <interactant intactId="EBI-358049">
        <id>Q13895</id>
        <label>BYSL</label>
    </interactant>
    <organismsDiffer>false</organismsDiffer>
    <experiments>3</experiments>
</comment>
<comment type="interaction">
    <interactant intactId="EBI-2348662">
        <id>Q96MT3</id>
    </interactant>
    <interactant intactId="EBI-739789">
        <id>Q92997</id>
        <label>DVL3</label>
    </interactant>
    <organismsDiffer>false</organismsDiffer>
    <experiments>3</experiments>
</comment>
<comment type="interaction">
    <interactant intactId="EBI-2348662">
        <id>Q96MT3</id>
    </interactant>
    <interactant intactId="EBI-17181882">
        <id>O75564-2</id>
        <label>JRK</label>
    </interactant>
    <organismsDiffer>false</organismsDiffer>
    <experiments>3</experiments>
</comment>
<comment type="interaction">
    <interactant intactId="EBI-2348662">
        <id>Q96MT3</id>
    </interactant>
    <interactant intactId="EBI-8472129">
        <id>Q9HAQ2</id>
        <label>KIF9</label>
    </interactant>
    <organismsDiffer>false</organismsDiffer>
    <experiments>3</experiments>
</comment>
<comment type="interaction">
    <interactant intactId="EBI-2348662">
        <id>Q96MT3</id>
    </interactant>
    <interactant intactId="EBI-1567797">
        <id>Q8WWY3</id>
        <label>PRPF31</label>
    </interactant>
    <organismsDiffer>false</organismsDiffer>
    <experiments>6</experiments>
</comment>
<comment type="interaction">
    <interactant intactId="EBI-2348662">
        <id>Q96MT3</id>
    </interactant>
    <interactant intactId="EBI-10225961">
        <id>Q08E77</id>
        <label>UTP14C</label>
    </interactant>
    <organismsDiffer>false</organismsDiffer>
    <experiments>3</experiments>
</comment>
<comment type="interaction">
    <interactant intactId="EBI-2348662">
        <id>Q96MT3</id>
    </interactant>
    <interactant intactId="EBI-2312802">
        <id>Q8VIG1</id>
        <label>Rest</label>
    </interactant>
    <organismsDiffer>true</organismsDiffer>
    <experiments>4</experiments>
</comment>
<comment type="subcellular location">
    <subcellularLocation>
        <location evidence="6">Nucleus membrane</location>
    </subcellularLocation>
    <subcellularLocation>
        <location evidence="6">Cytoplasm</location>
        <location evidence="6">Cytosol</location>
    </subcellularLocation>
    <text>A smaller amount is detected in the cytosol.</text>
</comment>
<comment type="tissue specificity">
    <text evidence="5 6 9">Expressed at highest levels in placenta and at lower levels in lung, liver, kidney and pancreas. Expressed in thalamus, hippocampus, cerebral cortex, and cerebellum (in neurons rather than glia).</text>
</comment>
<comment type="disease" evidence="9 10">
    <disease id="DI-00953">
        <name>Epilepsy, progressive myoclonic 1B</name>
        <acronym>EPM1B</acronym>
        <description>A form of progressive myoclonic epilepsy, a clinically and genetically heterogeneous group of disorders defined by the combination of action and reflex myoclonus, other types of epileptic seizures, and progressive neurodegeneration and neurocognitive impairment. EPM1B is an autosomal recessive form characterized by myoclonus that progressed in severity over time, tonic-clonic seizures and ataxia.</description>
        <dbReference type="MIM" id="612437"/>
    </disease>
    <text>The disease is caused by variants affecting the gene represented in this entry.</text>
</comment>
<comment type="disease" evidence="11">
    <disease id="DI-02042">
        <name>Neural tube defects</name>
        <acronym>NTD</acronym>
        <description>Congenital malformations of the central nervous system and adjacent structures related to defective neural tube closure during the first trimester of pregnancy. Failure of neural tube closure can occur at any level of the embryonic axis. Common NTD forms include anencephaly, myelomeningocele and spina bifida, which result from the failure of fusion in the cranial and spinal region of the neural tube. NTDs have a multifactorial etiology encompassing both genetic and environmental components.</description>
        <dbReference type="MIM" id="182940"/>
    </disease>
    <text>Disease susceptibility may be associated with variants affecting the gene represented in this entry.</text>
</comment>
<comment type="similarity">
    <text evidence="12">Belongs to the prickle / espinas / testin family.</text>
</comment>
<dbReference type="EMBL" id="AF399844">
    <property type="protein sequence ID" value="AAQ03035.1"/>
    <property type="molecule type" value="mRNA"/>
</dbReference>
<dbReference type="EMBL" id="AK056189">
    <property type="protein sequence ID" value="BAB71116.1"/>
    <property type="molecule type" value="mRNA"/>
</dbReference>
<dbReference type="EMBL" id="AK056499">
    <property type="protein sequence ID" value="BAB71198.1"/>
    <property type="molecule type" value="mRNA"/>
</dbReference>
<dbReference type="EMBL" id="BC114939">
    <property type="protein sequence ID" value="AAI14940.1"/>
    <property type="molecule type" value="mRNA"/>
</dbReference>
<dbReference type="EMBL" id="BC114940">
    <property type="protein sequence ID" value="AAI14941.1"/>
    <property type="molecule type" value="mRNA"/>
</dbReference>
<dbReference type="CCDS" id="CCDS8742.1"/>
<dbReference type="RefSeq" id="NP_001138353.1">
    <property type="nucleotide sequence ID" value="NM_001144881.2"/>
</dbReference>
<dbReference type="RefSeq" id="NP_001138354.1">
    <property type="nucleotide sequence ID" value="NM_001144882.2"/>
</dbReference>
<dbReference type="RefSeq" id="NP_001138355.1">
    <property type="nucleotide sequence ID" value="NM_001144883.2"/>
</dbReference>
<dbReference type="RefSeq" id="NP_694571.2">
    <property type="nucleotide sequence ID" value="NM_153026.3"/>
</dbReference>
<dbReference type="RefSeq" id="XP_011536248.1">
    <property type="nucleotide sequence ID" value="XM_011537946.2"/>
</dbReference>
<dbReference type="RefSeq" id="XP_011536249.1">
    <property type="nucleotide sequence ID" value="XM_011537947.3"/>
</dbReference>
<dbReference type="RefSeq" id="XP_016874327.1">
    <property type="nucleotide sequence ID" value="XM_017018838.2"/>
</dbReference>
<dbReference type="RefSeq" id="XP_016874328.1">
    <property type="nucleotide sequence ID" value="XM_017018839.2"/>
</dbReference>
<dbReference type="RefSeq" id="XP_016874329.1">
    <property type="nucleotide sequence ID" value="XM_017018840.2"/>
</dbReference>
<dbReference type="RefSeq" id="XP_047284283.1">
    <property type="nucleotide sequence ID" value="XM_047428327.1"/>
</dbReference>
<dbReference type="RefSeq" id="XP_047284284.1">
    <property type="nucleotide sequence ID" value="XM_047428328.1"/>
</dbReference>
<dbReference type="RefSeq" id="XP_047284285.1">
    <property type="nucleotide sequence ID" value="XM_047428329.1"/>
</dbReference>
<dbReference type="RefSeq" id="XP_047284286.1">
    <property type="nucleotide sequence ID" value="XM_047428330.1"/>
</dbReference>
<dbReference type="RefSeq" id="XP_047284288.1">
    <property type="nucleotide sequence ID" value="XM_047428332.1"/>
</dbReference>
<dbReference type="RefSeq" id="XP_047284289.1">
    <property type="nucleotide sequence ID" value="XM_047428333.1"/>
</dbReference>
<dbReference type="RefSeq" id="XP_047284290.1">
    <property type="nucleotide sequence ID" value="XM_047428334.1"/>
</dbReference>
<dbReference type="RefSeq" id="XP_047284291.1">
    <property type="nucleotide sequence ID" value="XM_047428335.1"/>
</dbReference>
<dbReference type="RefSeq" id="XP_054227125.1">
    <property type="nucleotide sequence ID" value="XM_054371150.1"/>
</dbReference>
<dbReference type="RefSeq" id="XP_054227126.1">
    <property type="nucleotide sequence ID" value="XM_054371151.1"/>
</dbReference>
<dbReference type="RefSeq" id="XP_054227127.1">
    <property type="nucleotide sequence ID" value="XM_054371152.1"/>
</dbReference>
<dbReference type="RefSeq" id="XP_054227128.1">
    <property type="nucleotide sequence ID" value="XM_054371153.1"/>
</dbReference>
<dbReference type="RefSeq" id="XP_054227129.1">
    <property type="nucleotide sequence ID" value="XM_054371154.1"/>
</dbReference>
<dbReference type="RefSeq" id="XP_054227130.1">
    <property type="nucleotide sequence ID" value="XM_054371155.1"/>
</dbReference>
<dbReference type="RefSeq" id="XP_054227131.1">
    <property type="nucleotide sequence ID" value="XM_054371156.1"/>
</dbReference>
<dbReference type="RefSeq" id="XP_054227132.1">
    <property type="nucleotide sequence ID" value="XM_054371157.1"/>
</dbReference>
<dbReference type="RefSeq" id="XP_054227133.1">
    <property type="nucleotide sequence ID" value="XM_054371158.1"/>
</dbReference>
<dbReference type="RefSeq" id="XP_054227134.1">
    <property type="nucleotide sequence ID" value="XM_054371159.1"/>
</dbReference>
<dbReference type="RefSeq" id="XP_054227135.1">
    <property type="nucleotide sequence ID" value="XM_054371160.1"/>
</dbReference>
<dbReference type="RefSeq" id="XP_054227136.1">
    <property type="nucleotide sequence ID" value="XM_054371161.1"/>
</dbReference>
<dbReference type="RefSeq" id="XP_054227137.1">
    <property type="nucleotide sequence ID" value="XM_054371162.1"/>
</dbReference>
<dbReference type="SMR" id="Q96MT3"/>
<dbReference type="BioGRID" id="126835">
    <property type="interactions" value="25"/>
</dbReference>
<dbReference type="FunCoup" id="Q96MT3">
    <property type="interactions" value="1431"/>
</dbReference>
<dbReference type="IntAct" id="Q96MT3">
    <property type="interactions" value="13"/>
</dbReference>
<dbReference type="STRING" id="9606.ENSP00000345064"/>
<dbReference type="GlyConnect" id="2062">
    <property type="glycosylation" value="1 N-Linked glycan (1 site)"/>
</dbReference>
<dbReference type="GlyCosmos" id="Q96MT3">
    <property type="glycosylation" value="1 site, 2 glycans"/>
</dbReference>
<dbReference type="GlyGen" id="Q96MT3">
    <property type="glycosylation" value="1 site, 2 N-linked glycans (1 site)"/>
</dbReference>
<dbReference type="iPTMnet" id="Q96MT3"/>
<dbReference type="PhosphoSitePlus" id="Q96MT3"/>
<dbReference type="BioMuta" id="PRICKLE1"/>
<dbReference type="DMDM" id="59800163"/>
<dbReference type="MassIVE" id="Q96MT3"/>
<dbReference type="PaxDb" id="9606-ENSP00000345064"/>
<dbReference type="PeptideAtlas" id="Q96MT3"/>
<dbReference type="ProteomicsDB" id="77402"/>
<dbReference type="Antibodypedia" id="13204">
    <property type="antibodies" value="134 antibodies from 23 providers"/>
</dbReference>
<dbReference type="DNASU" id="144165"/>
<dbReference type="Ensembl" id="ENST00000345127.9">
    <property type="protein sequence ID" value="ENSP00000345064.3"/>
    <property type="gene ID" value="ENSG00000139174.12"/>
</dbReference>
<dbReference type="Ensembl" id="ENST00000445766.7">
    <property type="protein sequence ID" value="ENSP00000398947.2"/>
    <property type="gene ID" value="ENSG00000139174.12"/>
</dbReference>
<dbReference type="Ensembl" id="ENST00000455697.6">
    <property type="protein sequence ID" value="ENSP00000401060.1"/>
    <property type="gene ID" value="ENSG00000139174.12"/>
</dbReference>
<dbReference type="Ensembl" id="ENST00000548696.6">
    <property type="protein sequence ID" value="ENSP00000448359.1"/>
    <property type="gene ID" value="ENSG00000139174.12"/>
</dbReference>
<dbReference type="Ensembl" id="ENST00000552240.6">
    <property type="protein sequence ID" value="ENSP00000449819.1"/>
    <property type="gene ID" value="ENSG00000139174.12"/>
</dbReference>
<dbReference type="Ensembl" id="ENST00000639566.1">
    <property type="protein sequence ID" value="ENSP00000492332.1"/>
    <property type="gene ID" value="ENSG00000139174.12"/>
</dbReference>
<dbReference type="Ensembl" id="ENST00000639589.1">
    <property type="protein sequence ID" value="ENSP00000491051.1"/>
    <property type="gene ID" value="ENSG00000139174.12"/>
</dbReference>
<dbReference type="Ensembl" id="ENST00000639958.1">
    <property type="protein sequence ID" value="ENSP00000492644.1"/>
    <property type="gene ID" value="ENSG00000139174.12"/>
</dbReference>
<dbReference type="Ensembl" id="ENST00000640055.1">
    <property type="protein sequence ID" value="ENSP00000492763.1"/>
    <property type="gene ID" value="ENSG00000139174.12"/>
</dbReference>
<dbReference type="Ensembl" id="ENST00000640132.1">
    <property type="protein sequence ID" value="ENSP00000491228.1"/>
    <property type="gene ID" value="ENSG00000139174.12"/>
</dbReference>
<dbReference type="GeneID" id="144165"/>
<dbReference type="KEGG" id="hsa:144165"/>
<dbReference type="MANE-Select" id="ENST00000345127.9">
    <property type="protein sequence ID" value="ENSP00000345064.3"/>
    <property type="RefSeq nucleotide sequence ID" value="NM_153026.3"/>
    <property type="RefSeq protein sequence ID" value="NP_694571.2"/>
</dbReference>
<dbReference type="UCSC" id="uc001rnl.4">
    <property type="organism name" value="human"/>
</dbReference>
<dbReference type="AGR" id="HGNC:17019"/>
<dbReference type="CTD" id="144165"/>
<dbReference type="DisGeNET" id="144165"/>
<dbReference type="GeneCards" id="PRICKLE1"/>
<dbReference type="GeneReviews" id="PRICKLE1"/>
<dbReference type="HGNC" id="HGNC:17019">
    <property type="gene designation" value="PRICKLE1"/>
</dbReference>
<dbReference type="HPA" id="ENSG00000139174">
    <property type="expression patterns" value="Low tissue specificity"/>
</dbReference>
<dbReference type="MalaCards" id="PRICKLE1"/>
<dbReference type="MIM" id="182940">
    <property type="type" value="phenotype"/>
</dbReference>
<dbReference type="MIM" id="608500">
    <property type="type" value="gene"/>
</dbReference>
<dbReference type="MIM" id="612437">
    <property type="type" value="phenotype"/>
</dbReference>
<dbReference type="neXtProt" id="NX_Q96MT3"/>
<dbReference type="OpenTargets" id="ENSG00000139174"/>
<dbReference type="Orphanet" id="308">
    <property type="disease" value="Progressive myoclonic epilepsy type 1"/>
</dbReference>
<dbReference type="PharmGKB" id="PA134906946"/>
<dbReference type="VEuPathDB" id="HostDB:ENSG00000139174"/>
<dbReference type="eggNOG" id="KOG1704">
    <property type="taxonomic scope" value="Eukaryota"/>
</dbReference>
<dbReference type="GeneTree" id="ENSGT00940000157529"/>
<dbReference type="HOGENOM" id="CLU_008937_5_0_1"/>
<dbReference type="InParanoid" id="Q96MT3"/>
<dbReference type="OMA" id="NLVFGCQ"/>
<dbReference type="OrthoDB" id="10069167at2759"/>
<dbReference type="PAN-GO" id="Q96MT3">
    <property type="GO annotations" value="0 GO annotations based on evolutionary models"/>
</dbReference>
<dbReference type="PhylomeDB" id="Q96MT3"/>
<dbReference type="TreeFam" id="TF313265"/>
<dbReference type="PathwayCommons" id="Q96MT3"/>
<dbReference type="Reactome" id="R-HSA-4608870">
    <property type="pathway name" value="Asymmetric localization of PCP proteins"/>
</dbReference>
<dbReference type="SignaLink" id="Q96MT3"/>
<dbReference type="SIGNOR" id="Q96MT3"/>
<dbReference type="BioGRID-ORCS" id="144165">
    <property type="hits" value="15 hits in 1151 CRISPR screens"/>
</dbReference>
<dbReference type="ChiTaRS" id="PRICKLE1">
    <property type="organism name" value="human"/>
</dbReference>
<dbReference type="GenomeRNAi" id="144165"/>
<dbReference type="Pharos" id="Q96MT3">
    <property type="development level" value="Tbio"/>
</dbReference>
<dbReference type="PRO" id="PR:Q96MT3"/>
<dbReference type="Proteomes" id="UP000005640">
    <property type="component" value="Chromosome 12"/>
</dbReference>
<dbReference type="RNAct" id="Q96MT3">
    <property type="molecule type" value="protein"/>
</dbReference>
<dbReference type="Bgee" id="ENSG00000139174">
    <property type="expression patterns" value="Expressed in buccal mucosa cell and 184 other cell types or tissues"/>
</dbReference>
<dbReference type="ExpressionAtlas" id="Q96MT3">
    <property type="expression patterns" value="baseline and differential"/>
</dbReference>
<dbReference type="GO" id="GO:0031254">
    <property type="term" value="C:cell trailing edge"/>
    <property type="evidence" value="ECO:0007669"/>
    <property type="project" value="Ensembl"/>
</dbReference>
<dbReference type="GO" id="GO:0005829">
    <property type="term" value="C:cytosol"/>
    <property type="evidence" value="ECO:0000314"/>
    <property type="project" value="UniProtKB"/>
</dbReference>
<dbReference type="GO" id="GO:0098978">
    <property type="term" value="C:glutamatergic synapse"/>
    <property type="evidence" value="ECO:0007669"/>
    <property type="project" value="Ensembl"/>
</dbReference>
<dbReference type="GO" id="GO:0031965">
    <property type="term" value="C:nuclear membrane"/>
    <property type="evidence" value="ECO:0000314"/>
    <property type="project" value="UniProtKB"/>
</dbReference>
<dbReference type="GO" id="GO:0005634">
    <property type="term" value="C:nucleus"/>
    <property type="evidence" value="ECO:0000314"/>
    <property type="project" value="UniProtKB"/>
</dbReference>
<dbReference type="GO" id="GO:0014069">
    <property type="term" value="C:postsynaptic density"/>
    <property type="evidence" value="ECO:0007669"/>
    <property type="project" value="Ensembl"/>
</dbReference>
<dbReference type="GO" id="GO:0000502">
    <property type="term" value="C:proteasome complex"/>
    <property type="evidence" value="ECO:0007669"/>
    <property type="project" value="Ensembl"/>
</dbReference>
<dbReference type="GO" id="GO:0044877">
    <property type="term" value="F:protein-containing complex binding"/>
    <property type="evidence" value="ECO:0007669"/>
    <property type="project" value="Ensembl"/>
</dbReference>
<dbReference type="GO" id="GO:0008270">
    <property type="term" value="F:zinc ion binding"/>
    <property type="evidence" value="ECO:0007669"/>
    <property type="project" value="InterPro"/>
</dbReference>
<dbReference type="GO" id="GO:1905070">
    <property type="term" value="P:anterior visceral endoderm cell migration"/>
    <property type="evidence" value="ECO:0007669"/>
    <property type="project" value="Ensembl"/>
</dbReference>
<dbReference type="GO" id="GO:0035904">
    <property type="term" value="P:aorta development"/>
    <property type="evidence" value="ECO:0007669"/>
    <property type="project" value="Ensembl"/>
</dbReference>
<dbReference type="GO" id="GO:0006915">
    <property type="term" value="P:apoptotic process"/>
    <property type="evidence" value="ECO:0007669"/>
    <property type="project" value="Ensembl"/>
</dbReference>
<dbReference type="GO" id="GO:0007409">
    <property type="term" value="P:axonogenesis"/>
    <property type="evidence" value="ECO:0007669"/>
    <property type="project" value="Ensembl"/>
</dbReference>
<dbReference type="GO" id="GO:0071711">
    <property type="term" value="P:basement membrane organization"/>
    <property type="evidence" value="ECO:0007669"/>
    <property type="project" value="Ensembl"/>
</dbReference>
<dbReference type="GO" id="GO:0030282">
    <property type="term" value="P:bone mineralization"/>
    <property type="evidence" value="ECO:0007669"/>
    <property type="project" value="Ensembl"/>
</dbReference>
<dbReference type="GO" id="GO:0055013">
    <property type="term" value="P:cardiac muscle cell development"/>
    <property type="evidence" value="ECO:0007669"/>
    <property type="project" value="Ensembl"/>
</dbReference>
<dbReference type="GO" id="GO:0098609">
    <property type="term" value="P:cell-cell adhesion"/>
    <property type="evidence" value="ECO:0007669"/>
    <property type="project" value="Ensembl"/>
</dbReference>
<dbReference type="GO" id="GO:0060271">
    <property type="term" value="P:cilium assembly"/>
    <property type="evidence" value="ECO:0007669"/>
    <property type="project" value="Ensembl"/>
</dbReference>
<dbReference type="GO" id="GO:0061303">
    <property type="term" value="P:cornea development in camera-type eye"/>
    <property type="evidence" value="ECO:0007669"/>
    <property type="project" value="Ensembl"/>
</dbReference>
<dbReference type="GO" id="GO:0060976">
    <property type="term" value="P:coronary vasculature development"/>
    <property type="evidence" value="ECO:0007669"/>
    <property type="project" value="Ensembl"/>
</dbReference>
<dbReference type="GO" id="GO:0030705">
    <property type="term" value="P:cytoskeleton-dependent intracellular transport"/>
    <property type="evidence" value="ECO:0007669"/>
    <property type="project" value="Ensembl"/>
</dbReference>
<dbReference type="GO" id="GO:0016358">
    <property type="term" value="P:dendrite development"/>
    <property type="evidence" value="ECO:0007669"/>
    <property type="project" value="Ensembl"/>
</dbReference>
<dbReference type="GO" id="GO:1990403">
    <property type="term" value="P:embryonic brain development"/>
    <property type="evidence" value="ECO:0007669"/>
    <property type="project" value="Ensembl"/>
</dbReference>
<dbReference type="GO" id="GO:0035880">
    <property type="term" value="P:embryonic nail plate morphogenesis"/>
    <property type="evidence" value="ECO:0007669"/>
    <property type="project" value="Ensembl"/>
</dbReference>
<dbReference type="GO" id="GO:0007173">
    <property type="term" value="P:epidermal growth factor receptor signaling pathway"/>
    <property type="evidence" value="ECO:0007669"/>
    <property type="project" value="Ensembl"/>
</dbReference>
<dbReference type="GO" id="GO:0061159">
    <property type="term" value="P:establishment of bipolar cell polarity involved in cell morphogenesis"/>
    <property type="evidence" value="ECO:0007669"/>
    <property type="project" value="Ensembl"/>
</dbReference>
<dbReference type="GO" id="GO:0085029">
    <property type="term" value="P:extracellular matrix assembly"/>
    <property type="evidence" value="ECO:0007669"/>
    <property type="project" value="Ensembl"/>
</dbReference>
<dbReference type="GO" id="GO:0061029">
    <property type="term" value="P:eyelid development in camera-type eye"/>
    <property type="evidence" value="ECO:0007669"/>
    <property type="project" value="Ensembl"/>
</dbReference>
<dbReference type="GO" id="GO:0060325">
    <property type="term" value="P:face morphogenesis"/>
    <property type="evidence" value="ECO:0007669"/>
    <property type="project" value="Ensembl"/>
</dbReference>
<dbReference type="GO" id="GO:0120181">
    <property type="term" value="P:focal adhesion disassembly"/>
    <property type="evidence" value="ECO:0007669"/>
    <property type="project" value="Ensembl"/>
</dbReference>
<dbReference type="GO" id="GO:0010467">
    <property type="term" value="P:gene expression"/>
    <property type="evidence" value="ECO:0007669"/>
    <property type="project" value="Ensembl"/>
</dbReference>
<dbReference type="GO" id="GO:0099562">
    <property type="term" value="P:maintenance of postsynaptic density structure"/>
    <property type="evidence" value="ECO:0007669"/>
    <property type="project" value="Ensembl"/>
</dbReference>
<dbReference type="GO" id="GO:0060485">
    <property type="term" value="P:mesenchyme development"/>
    <property type="evidence" value="ECO:0007669"/>
    <property type="project" value="Ensembl"/>
</dbReference>
<dbReference type="GO" id="GO:0090307">
    <property type="term" value="P:mitotic spindle assembly"/>
    <property type="evidence" value="ECO:0007669"/>
    <property type="project" value="Ensembl"/>
</dbReference>
<dbReference type="GO" id="GO:0035264">
    <property type="term" value="P:multicellular organism growth"/>
    <property type="evidence" value="ECO:0007669"/>
    <property type="project" value="Ensembl"/>
</dbReference>
<dbReference type="GO" id="GO:0090090">
    <property type="term" value="P:negative regulation of canonical Wnt signaling pathway"/>
    <property type="evidence" value="ECO:0000314"/>
    <property type="project" value="BHF-UCL"/>
</dbReference>
<dbReference type="GO" id="GO:2000691">
    <property type="term" value="P:negative regulation of cardiac muscle cell myoblast differentiation"/>
    <property type="evidence" value="ECO:0000314"/>
    <property type="project" value="UniProtKB"/>
</dbReference>
<dbReference type="GO" id="GO:0045892">
    <property type="term" value="P:negative regulation of DNA-templated transcription"/>
    <property type="evidence" value="ECO:0000314"/>
    <property type="project" value="BHF-UCL"/>
</dbReference>
<dbReference type="GO" id="GO:0001843">
    <property type="term" value="P:neural tube closure"/>
    <property type="evidence" value="ECO:0000315"/>
    <property type="project" value="UniProtKB"/>
</dbReference>
<dbReference type="GO" id="GO:1990138">
    <property type="term" value="P:neuron projection extension"/>
    <property type="evidence" value="ECO:0007669"/>
    <property type="project" value="Ensembl"/>
</dbReference>
<dbReference type="GO" id="GO:0003151">
    <property type="term" value="P:outflow tract morphogenesis"/>
    <property type="evidence" value="ECO:0007669"/>
    <property type="project" value="Ensembl"/>
</dbReference>
<dbReference type="GO" id="GO:0061865">
    <property type="term" value="P:polarized secretion of basement membrane proteins in epithelium"/>
    <property type="evidence" value="ECO:0007669"/>
    <property type="project" value="Ensembl"/>
</dbReference>
<dbReference type="GO" id="GO:0032436">
    <property type="term" value="P:positive regulation of proteasomal ubiquitin-dependent protein catabolic process"/>
    <property type="evidence" value="ECO:0000314"/>
    <property type="project" value="BHF-UCL"/>
</dbReference>
<dbReference type="GO" id="GO:0031398">
    <property type="term" value="P:positive regulation of protein ubiquitination"/>
    <property type="evidence" value="ECO:0000314"/>
    <property type="project" value="BHF-UCL"/>
</dbReference>
<dbReference type="GO" id="GO:0036342">
    <property type="term" value="P:post-anal tail morphogenesis"/>
    <property type="evidence" value="ECO:0007669"/>
    <property type="project" value="Ensembl"/>
</dbReference>
<dbReference type="GO" id="GO:0090009">
    <property type="term" value="P:primitive streak formation"/>
    <property type="evidence" value="ECO:0007669"/>
    <property type="project" value="Ensembl"/>
</dbReference>
<dbReference type="GO" id="GO:0006606">
    <property type="term" value="P:protein import into nucleus"/>
    <property type="evidence" value="ECO:0000314"/>
    <property type="project" value="UniProtKB"/>
</dbReference>
<dbReference type="GO" id="GO:0099151">
    <property type="term" value="P:regulation of postsynaptic density assembly"/>
    <property type="evidence" value="ECO:0007669"/>
    <property type="project" value="Ensembl"/>
</dbReference>
<dbReference type="GO" id="GO:0061326">
    <property type="term" value="P:renal tubule development"/>
    <property type="evidence" value="ECO:0007669"/>
    <property type="project" value="Ensembl"/>
</dbReference>
<dbReference type="GO" id="GO:0051602">
    <property type="term" value="P:response to electrical stimulus"/>
    <property type="evidence" value="ECO:0007669"/>
    <property type="project" value="Ensembl"/>
</dbReference>
<dbReference type="GO" id="GO:0009410">
    <property type="term" value="P:response to xenobiotic stimulus"/>
    <property type="evidence" value="ECO:0007669"/>
    <property type="project" value="Ensembl"/>
</dbReference>
<dbReference type="GO" id="GO:0070075">
    <property type="term" value="P:tear secretion"/>
    <property type="evidence" value="ECO:0007669"/>
    <property type="project" value="Ensembl"/>
</dbReference>
<dbReference type="GO" id="GO:0001894">
    <property type="term" value="P:tissue homeostasis"/>
    <property type="evidence" value="ECO:0007669"/>
    <property type="project" value="Ensembl"/>
</dbReference>
<dbReference type="GO" id="GO:0016192">
    <property type="term" value="P:vesicle-mediated transport"/>
    <property type="evidence" value="ECO:0007669"/>
    <property type="project" value="Ensembl"/>
</dbReference>
<dbReference type="GO" id="GO:0060071">
    <property type="term" value="P:Wnt signaling pathway, planar cell polarity pathway"/>
    <property type="evidence" value="ECO:0000303"/>
    <property type="project" value="ParkinsonsUK-UCL"/>
</dbReference>
<dbReference type="CDD" id="cd09483">
    <property type="entry name" value="LIM1_Prickle_1"/>
    <property type="match status" value="1"/>
</dbReference>
<dbReference type="CDD" id="cd09418">
    <property type="entry name" value="LIM2_Prickle"/>
    <property type="match status" value="1"/>
</dbReference>
<dbReference type="CDD" id="cd09420">
    <property type="entry name" value="LIM3_Prickle"/>
    <property type="match status" value="1"/>
</dbReference>
<dbReference type="CDD" id="cd09827">
    <property type="entry name" value="PET_Prickle"/>
    <property type="match status" value="1"/>
</dbReference>
<dbReference type="FunFam" id="2.10.110.10:FF:000022">
    <property type="entry name" value="prickle-like protein 2 isoform X1"/>
    <property type="match status" value="1"/>
</dbReference>
<dbReference type="FunFam" id="2.10.110.10:FF:000035">
    <property type="entry name" value="prickle-like protein 2 isoform X1"/>
    <property type="match status" value="1"/>
</dbReference>
<dbReference type="FunFam" id="2.10.110.10:FF:000005">
    <property type="entry name" value="Testin isoform 1"/>
    <property type="match status" value="1"/>
</dbReference>
<dbReference type="Gene3D" id="2.10.110.10">
    <property type="entry name" value="Cysteine Rich Protein"/>
    <property type="match status" value="3"/>
</dbReference>
<dbReference type="InterPro" id="IPR033726">
    <property type="entry name" value="LIM2_prickle"/>
</dbReference>
<dbReference type="InterPro" id="IPR033727">
    <property type="entry name" value="LIM3_prickle"/>
</dbReference>
<dbReference type="InterPro" id="IPR010442">
    <property type="entry name" value="PET_domain"/>
</dbReference>
<dbReference type="InterPro" id="IPR033723">
    <property type="entry name" value="PET_prickle"/>
</dbReference>
<dbReference type="InterPro" id="IPR047120">
    <property type="entry name" value="Pk/Esn/Tes"/>
</dbReference>
<dbReference type="InterPro" id="IPR001781">
    <property type="entry name" value="Znf_LIM"/>
</dbReference>
<dbReference type="PANTHER" id="PTHR24211">
    <property type="entry name" value="LIM DOMAIN-CONTAINING PROTEIN"/>
    <property type="match status" value="1"/>
</dbReference>
<dbReference type="PANTHER" id="PTHR24211:SF15">
    <property type="entry name" value="PRICKLE-LIKE PROTEIN 1"/>
    <property type="match status" value="1"/>
</dbReference>
<dbReference type="Pfam" id="PF00412">
    <property type="entry name" value="LIM"/>
    <property type="match status" value="3"/>
</dbReference>
<dbReference type="Pfam" id="PF06297">
    <property type="entry name" value="PET"/>
    <property type="match status" value="1"/>
</dbReference>
<dbReference type="SMART" id="SM00132">
    <property type="entry name" value="LIM"/>
    <property type="match status" value="3"/>
</dbReference>
<dbReference type="SUPFAM" id="SSF57716">
    <property type="entry name" value="Glucocorticoid receptor-like (DNA-binding domain)"/>
    <property type="match status" value="2"/>
</dbReference>
<dbReference type="PROSITE" id="PS00478">
    <property type="entry name" value="LIM_DOMAIN_1"/>
    <property type="match status" value="2"/>
</dbReference>
<dbReference type="PROSITE" id="PS50023">
    <property type="entry name" value="LIM_DOMAIN_2"/>
    <property type="match status" value="3"/>
</dbReference>
<dbReference type="PROSITE" id="PS51303">
    <property type="entry name" value="PET"/>
    <property type="match status" value="1"/>
</dbReference>
<gene>
    <name type="primary">PRICKLE1</name>
    <name type="synonym">RILP</name>
</gene>
<protein>
    <recommendedName>
        <fullName>Prickle-like protein 1</fullName>
    </recommendedName>
    <alternativeName>
        <fullName>REST/NRSF-interacting LIM domain protein 1</fullName>
    </alternativeName>
</protein>
<reference key="1">
    <citation type="journal article" date="2003" name="Mol. Cell. Biol.">
        <title>REST/NRSF-interacting LIM domain protein, a putative nuclear translocation receptor.</title>
        <authorList>
            <person name="Shimojo M."/>
            <person name="Hersh L.B."/>
        </authorList>
    </citation>
    <scope>NUCLEOTIDE SEQUENCE [MRNA]</scope>
    <scope>TISSUE SPECIFICITY</scope>
    <scope>ISOPRENYLATION AT CYS-828</scope>
    <scope>MUTAGENESIS OF 828-CYS--SER-831</scope>
    <scope>SUBCELLULAR LOCATION</scope>
    <scope>INTERACTION WITH REST</scope>
    <source>
        <tissue>Brain</tissue>
    </source>
</reference>
<reference key="2">
    <citation type="journal article" date="2004" name="Nat. Genet.">
        <title>Complete sequencing and characterization of 21,243 full-length human cDNAs.</title>
        <authorList>
            <person name="Ota T."/>
            <person name="Suzuki Y."/>
            <person name="Nishikawa T."/>
            <person name="Otsuki T."/>
            <person name="Sugiyama T."/>
            <person name="Irie R."/>
            <person name="Wakamatsu A."/>
            <person name="Hayashi K."/>
            <person name="Sato H."/>
            <person name="Nagai K."/>
            <person name="Kimura K."/>
            <person name="Makita H."/>
            <person name="Sekine M."/>
            <person name="Obayashi M."/>
            <person name="Nishi T."/>
            <person name="Shibahara T."/>
            <person name="Tanaka T."/>
            <person name="Ishii S."/>
            <person name="Yamamoto J."/>
            <person name="Saito K."/>
            <person name="Kawai Y."/>
            <person name="Isono Y."/>
            <person name="Nakamura Y."/>
            <person name="Nagahari K."/>
            <person name="Murakami K."/>
            <person name="Yasuda T."/>
            <person name="Iwayanagi T."/>
            <person name="Wagatsuma M."/>
            <person name="Shiratori A."/>
            <person name="Sudo H."/>
            <person name="Hosoiri T."/>
            <person name="Kaku Y."/>
            <person name="Kodaira H."/>
            <person name="Kondo H."/>
            <person name="Sugawara M."/>
            <person name="Takahashi M."/>
            <person name="Kanda K."/>
            <person name="Yokoi T."/>
            <person name="Furuya T."/>
            <person name="Kikkawa E."/>
            <person name="Omura Y."/>
            <person name="Abe K."/>
            <person name="Kamihara K."/>
            <person name="Katsuta N."/>
            <person name="Sato K."/>
            <person name="Tanikawa M."/>
            <person name="Yamazaki M."/>
            <person name="Ninomiya K."/>
            <person name="Ishibashi T."/>
            <person name="Yamashita H."/>
            <person name="Murakawa K."/>
            <person name="Fujimori K."/>
            <person name="Tanai H."/>
            <person name="Kimata M."/>
            <person name="Watanabe M."/>
            <person name="Hiraoka S."/>
            <person name="Chiba Y."/>
            <person name="Ishida S."/>
            <person name="Ono Y."/>
            <person name="Takiguchi S."/>
            <person name="Watanabe S."/>
            <person name="Yosida M."/>
            <person name="Hotuta T."/>
            <person name="Kusano J."/>
            <person name="Kanehori K."/>
            <person name="Takahashi-Fujii A."/>
            <person name="Hara H."/>
            <person name="Tanase T.-O."/>
            <person name="Nomura Y."/>
            <person name="Togiya S."/>
            <person name="Komai F."/>
            <person name="Hara R."/>
            <person name="Takeuchi K."/>
            <person name="Arita M."/>
            <person name="Imose N."/>
            <person name="Musashino K."/>
            <person name="Yuuki H."/>
            <person name="Oshima A."/>
            <person name="Sasaki N."/>
            <person name="Aotsuka S."/>
            <person name="Yoshikawa Y."/>
            <person name="Matsunawa H."/>
            <person name="Ichihara T."/>
            <person name="Shiohata N."/>
            <person name="Sano S."/>
            <person name="Moriya S."/>
            <person name="Momiyama H."/>
            <person name="Satoh N."/>
            <person name="Takami S."/>
            <person name="Terashima Y."/>
            <person name="Suzuki O."/>
            <person name="Nakagawa S."/>
            <person name="Senoh A."/>
            <person name="Mizoguchi H."/>
            <person name="Goto Y."/>
            <person name="Shimizu F."/>
            <person name="Wakebe H."/>
            <person name="Hishigaki H."/>
            <person name="Watanabe T."/>
            <person name="Sugiyama A."/>
            <person name="Takemoto M."/>
            <person name="Kawakami B."/>
            <person name="Yamazaki M."/>
            <person name="Watanabe K."/>
            <person name="Kumagai A."/>
            <person name="Itakura S."/>
            <person name="Fukuzumi Y."/>
            <person name="Fujimori Y."/>
            <person name="Komiyama M."/>
            <person name="Tashiro H."/>
            <person name="Tanigami A."/>
            <person name="Fujiwara T."/>
            <person name="Ono T."/>
            <person name="Yamada K."/>
            <person name="Fujii Y."/>
            <person name="Ozaki K."/>
            <person name="Hirao M."/>
            <person name="Ohmori Y."/>
            <person name="Kawabata A."/>
            <person name="Hikiji T."/>
            <person name="Kobatake N."/>
            <person name="Inagaki H."/>
            <person name="Ikema Y."/>
            <person name="Okamoto S."/>
            <person name="Okitani R."/>
            <person name="Kawakami T."/>
            <person name="Noguchi S."/>
            <person name="Itoh T."/>
            <person name="Shigeta K."/>
            <person name="Senba T."/>
            <person name="Matsumura K."/>
            <person name="Nakajima Y."/>
            <person name="Mizuno T."/>
            <person name="Morinaga M."/>
            <person name="Sasaki M."/>
            <person name="Togashi T."/>
            <person name="Oyama M."/>
            <person name="Hata H."/>
            <person name="Watanabe M."/>
            <person name="Komatsu T."/>
            <person name="Mizushima-Sugano J."/>
            <person name="Satoh T."/>
            <person name="Shirai Y."/>
            <person name="Takahashi Y."/>
            <person name="Nakagawa K."/>
            <person name="Okumura K."/>
            <person name="Nagase T."/>
            <person name="Nomura N."/>
            <person name="Kikuchi H."/>
            <person name="Masuho Y."/>
            <person name="Yamashita R."/>
            <person name="Nakai K."/>
            <person name="Yada T."/>
            <person name="Nakamura Y."/>
            <person name="Ohara O."/>
            <person name="Isogai T."/>
            <person name="Sugano S."/>
        </authorList>
    </citation>
    <scope>NUCLEOTIDE SEQUENCE [LARGE SCALE MRNA]</scope>
</reference>
<reference key="3">
    <citation type="journal article" date="2004" name="Genome Res.">
        <title>The status, quality, and expansion of the NIH full-length cDNA project: the Mammalian Gene Collection (MGC).</title>
        <authorList>
            <consortium name="The MGC Project Team"/>
        </authorList>
    </citation>
    <scope>NUCLEOTIDE SEQUENCE [LARGE SCALE MRNA]</scope>
</reference>
<reference key="4">
    <citation type="journal article" date="2003" name="Int. J. Mol. Med.">
        <title>Identification and characterization of human PRICKLE1 and PRICKLE2 genes as well as mouse Prickle1 and Prickle2 genes homologous to Drosophila tissue polarity gene prickle.</title>
        <authorList>
            <person name="Katoh M."/>
            <person name="Katoh M."/>
        </authorList>
    </citation>
    <scope>IDENTIFICATION</scope>
    <scope>TISSUE SPECIFICITY</scope>
</reference>
<reference key="5">
    <citation type="journal article" date="2006" name="Neurosci. Lett.">
        <title>Characterization of the nuclear targeting signal of REST/NRSF.</title>
        <authorList>
            <person name="Shimojo M."/>
        </authorList>
    </citation>
    <scope>INTERACTION WITH REST</scope>
</reference>
<reference key="6">
    <citation type="journal article" date="2007" name="PLoS Comput. Biol.">
        <title>Towards complete sets of farnesylated and geranylgeranylated proteins.</title>
        <authorList>
            <person name="Maurer-Stroh S."/>
            <person name="Koranda M."/>
            <person name="Benetka W."/>
            <person name="Schneider G."/>
            <person name="Sirota F.L."/>
            <person name="Eisenhaber F."/>
        </authorList>
    </citation>
    <scope>ISOPRENYLATION AT CYS-828</scope>
</reference>
<reference key="7">
    <citation type="journal article" date="2008" name="Am. J. Hum. Genet.">
        <title>A homozygous mutation in human PRICKLE1 causes an autosomal-recessive progressive myoclonus epilepsy-ataxia syndrome.</title>
        <authorList>
            <person name="Bassuk A.G."/>
            <person name="Wallace R.H."/>
            <person name="Buhr A."/>
            <person name="Buller A.R."/>
            <person name="Afawi Z."/>
            <person name="Shimojo M."/>
            <person name="Miyata S."/>
            <person name="Chen S."/>
            <person name="Gonzalez-Alegre P."/>
            <person name="Griesbach H.L."/>
            <person name="Wu S."/>
            <person name="Nashelsky M."/>
            <person name="Vladar E.K."/>
            <person name="Antic D."/>
            <person name="Ferguson P.J."/>
            <person name="Cirak S."/>
            <person name="Voit T."/>
            <person name="Scott M.P."/>
            <person name="Axelrod J.D."/>
            <person name="Gurnett C."/>
            <person name="Daoud A.S."/>
            <person name="Kivity S."/>
            <person name="Neufeld M.Y."/>
            <person name="Mazarib A."/>
            <person name="Straussberg R."/>
            <person name="Walid S."/>
            <person name="Korczyn A.D."/>
            <person name="Slusarski D.C."/>
            <person name="Berkovic S.F."/>
            <person name="El-Shanti H.I."/>
        </authorList>
    </citation>
    <scope>TISSUE SPECIFICITY</scope>
    <scope>VARIANT EPM1B GLN-104</scope>
    <scope>CHARACTERIZATION OF VARIANT EPM1B GLN-104</scope>
</reference>
<reference key="8">
    <citation type="journal article" date="2011" name="Hum. Mutat.">
        <title>Identification and characterization of novel rare mutations in the planar cell polarity gene PRICKLE1 in human neural tube defects.</title>
        <authorList>
            <person name="Bosoi C.M."/>
            <person name="Capra V."/>
            <person name="Allache R."/>
            <person name="Trinh V.Q."/>
            <person name="De Marco P."/>
            <person name="Merello E."/>
            <person name="Drapeau P."/>
            <person name="Bassuk A.G."/>
            <person name="Kibar Z."/>
        </authorList>
    </citation>
    <scope>FUNCTION</scope>
    <scope>POSSIBLE INVOLVEMENT IN NTD</scope>
    <scope>VARIANTS THR-69; HIS-81; ILE-121; THR-124; MET-275; CYS-682; PHE-739; ASN-771 AND CYS-799</scope>
</reference>
<reference key="9">
    <citation type="journal article" date="2011" name="Sci. Signal.">
        <title>System-wide temporal characterization of the proteome and phosphoproteome of human embryonic stem cell differentiation.</title>
        <authorList>
            <person name="Rigbolt K.T."/>
            <person name="Prokhorova T.A."/>
            <person name="Akimov V."/>
            <person name="Henningsen J."/>
            <person name="Johansen P.T."/>
            <person name="Kratchmarova I."/>
            <person name="Kassem M."/>
            <person name="Mann M."/>
            <person name="Olsen J.V."/>
            <person name="Blagoev B."/>
        </authorList>
    </citation>
    <scope>IDENTIFICATION BY MASS SPECTROMETRY [LARGE SCALE ANALYSIS]</scope>
</reference>
<reference key="10">
    <citation type="journal article" date="2011" name="Am. J. Hum. Genet.">
        <title>Mutations in prickle orthologs cause seizures in flies, mice, and humans.</title>
        <authorList>
            <person name="Tao H."/>
            <person name="Manak J.R."/>
            <person name="Sowers L."/>
            <person name="Mei X."/>
            <person name="Kiyonari H."/>
            <person name="Abe T."/>
            <person name="Dahdaleh N.S."/>
            <person name="Yang T."/>
            <person name="Wu S."/>
            <person name="Chen S."/>
            <person name="Fox M.H."/>
            <person name="Gurnett C."/>
            <person name="Montine T."/>
            <person name="Bird T."/>
            <person name="Shaffer L.G."/>
            <person name="Rosenfeld J.A."/>
            <person name="McConnell J."/>
            <person name="Madan-Khetarpal S."/>
            <person name="Berry-Kravis E."/>
            <person name="Griesbach H."/>
            <person name="Saneto R.P."/>
            <person name="Scott M.P."/>
            <person name="Antic D."/>
            <person name="Reed J."/>
            <person name="Boland R."/>
            <person name="Ehaideb S.N."/>
            <person name="El-Shanti H."/>
            <person name="Mahajan V.B."/>
            <person name="Ferguson P.J."/>
            <person name="Axelrod J.D."/>
            <person name="Lehesjoki A.E."/>
            <person name="Fritzsch B."/>
            <person name="Slusarski D.C."/>
            <person name="Wemmie J."/>
            <person name="Ueno N."/>
            <person name="Bassuk A.G."/>
        </authorList>
    </citation>
    <scope>VARIANTS EPM1B GLN-104; HIS-144 AND HIS-472</scope>
</reference>
<organism>
    <name type="scientific">Homo sapiens</name>
    <name type="common">Human</name>
    <dbReference type="NCBI Taxonomy" id="9606"/>
    <lineage>
        <taxon>Eukaryota</taxon>
        <taxon>Metazoa</taxon>
        <taxon>Chordata</taxon>
        <taxon>Craniata</taxon>
        <taxon>Vertebrata</taxon>
        <taxon>Euteleostomi</taxon>
        <taxon>Mammalia</taxon>
        <taxon>Eutheria</taxon>
        <taxon>Euarchontoglires</taxon>
        <taxon>Primates</taxon>
        <taxon>Haplorrhini</taxon>
        <taxon>Catarrhini</taxon>
        <taxon>Hominidae</taxon>
        <taxon>Homo</taxon>
    </lineage>
</organism>